<keyword id="KW-0328">Glycosyltransferase</keyword>
<keyword id="KW-0479">Metal-binding</keyword>
<keyword id="KW-0671">Queuosine biosynthesis</keyword>
<keyword id="KW-1185">Reference proteome</keyword>
<keyword id="KW-0808">Transferase</keyword>
<keyword id="KW-0819">tRNA processing</keyword>
<keyword id="KW-0862">Zinc</keyword>
<dbReference type="EC" id="2.4.2.29" evidence="1"/>
<dbReference type="EMBL" id="BA000003">
    <property type="protein sequence ID" value="BAB12851.1"/>
    <property type="molecule type" value="Genomic_DNA"/>
</dbReference>
<dbReference type="RefSeq" id="NP_239965.1">
    <property type="nucleotide sequence ID" value="NC_002528.1"/>
</dbReference>
<dbReference type="RefSeq" id="WP_010895966.1">
    <property type="nucleotide sequence ID" value="NC_002528.1"/>
</dbReference>
<dbReference type="SMR" id="P57233"/>
<dbReference type="STRING" id="563178.BUAP5A_131"/>
<dbReference type="EnsemblBacteria" id="BAB12851">
    <property type="protein sequence ID" value="BAB12851"/>
    <property type="gene ID" value="BAB12851"/>
</dbReference>
<dbReference type="KEGG" id="buc:BU133"/>
<dbReference type="PATRIC" id="fig|107806.10.peg.142"/>
<dbReference type="eggNOG" id="COG0343">
    <property type="taxonomic scope" value="Bacteria"/>
</dbReference>
<dbReference type="HOGENOM" id="CLU_022060_0_1_6"/>
<dbReference type="UniPathway" id="UPA00392"/>
<dbReference type="Proteomes" id="UP000001806">
    <property type="component" value="Chromosome"/>
</dbReference>
<dbReference type="GO" id="GO:0005829">
    <property type="term" value="C:cytosol"/>
    <property type="evidence" value="ECO:0007669"/>
    <property type="project" value="TreeGrafter"/>
</dbReference>
<dbReference type="GO" id="GO:0046872">
    <property type="term" value="F:metal ion binding"/>
    <property type="evidence" value="ECO:0007669"/>
    <property type="project" value="UniProtKB-KW"/>
</dbReference>
<dbReference type="GO" id="GO:0008479">
    <property type="term" value="F:tRNA-guanosine(34) queuine transglycosylase activity"/>
    <property type="evidence" value="ECO:0007669"/>
    <property type="project" value="UniProtKB-UniRule"/>
</dbReference>
<dbReference type="GO" id="GO:0008616">
    <property type="term" value="P:queuosine biosynthetic process"/>
    <property type="evidence" value="ECO:0007669"/>
    <property type="project" value="UniProtKB-UniRule"/>
</dbReference>
<dbReference type="GO" id="GO:0002099">
    <property type="term" value="P:tRNA wobble guanine modification"/>
    <property type="evidence" value="ECO:0007669"/>
    <property type="project" value="TreeGrafter"/>
</dbReference>
<dbReference type="GO" id="GO:0101030">
    <property type="term" value="P:tRNA-guanine transglycosylation"/>
    <property type="evidence" value="ECO:0007669"/>
    <property type="project" value="InterPro"/>
</dbReference>
<dbReference type="FunFam" id="3.20.20.105:FF:000001">
    <property type="entry name" value="Queuine tRNA-ribosyltransferase"/>
    <property type="match status" value="1"/>
</dbReference>
<dbReference type="Gene3D" id="3.20.20.105">
    <property type="entry name" value="Queuine tRNA-ribosyltransferase-like"/>
    <property type="match status" value="1"/>
</dbReference>
<dbReference type="HAMAP" id="MF_00168">
    <property type="entry name" value="Q_tRNA_Tgt"/>
    <property type="match status" value="1"/>
</dbReference>
<dbReference type="InterPro" id="IPR050076">
    <property type="entry name" value="ArchSynthase1/Queuine_TRR"/>
</dbReference>
<dbReference type="InterPro" id="IPR004803">
    <property type="entry name" value="TGT"/>
</dbReference>
<dbReference type="InterPro" id="IPR036511">
    <property type="entry name" value="TGT-like_sf"/>
</dbReference>
<dbReference type="InterPro" id="IPR002616">
    <property type="entry name" value="tRNA_ribo_trans-like"/>
</dbReference>
<dbReference type="NCBIfam" id="TIGR00430">
    <property type="entry name" value="Q_tRNA_tgt"/>
    <property type="match status" value="1"/>
</dbReference>
<dbReference type="NCBIfam" id="TIGR00449">
    <property type="entry name" value="tgt_general"/>
    <property type="match status" value="1"/>
</dbReference>
<dbReference type="PANTHER" id="PTHR46499">
    <property type="entry name" value="QUEUINE TRNA-RIBOSYLTRANSFERASE"/>
    <property type="match status" value="1"/>
</dbReference>
<dbReference type="PANTHER" id="PTHR46499:SF1">
    <property type="entry name" value="QUEUINE TRNA-RIBOSYLTRANSFERASE"/>
    <property type="match status" value="1"/>
</dbReference>
<dbReference type="Pfam" id="PF01702">
    <property type="entry name" value="TGT"/>
    <property type="match status" value="1"/>
</dbReference>
<dbReference type="SUPFAM" id="SSF51713">
    <property type="entry name" value="tRNA-guanine transglycosylase"/>
    <property type="match status" value="1"/>
</dbReference>
<accession>P57233</accession>
<protein>
    <recommendedName>
        <fullName evidence="1">Queuine tRNA-ribosyltransferase</fullName>
        <ecNumber evidence="1">2.4.2.29</ecNumber>
    </recommendedName>
    <alternativeName>
        <fullName evidence="1">Guanine insertion enzyme</fullName>
    </alternativeName>
    <alternativeName>
        <fullName evidence="1">tRNA-guanine transglycosylase</fullName>
    </alternativeName>
</protein>
<proteinExistence type="inferred from homology"/>
<reference key="1">
    <citation type="journal article" date="2000" name="Nature">
        <title>Genome sequence of the endocellular bacterial symbiont of aphids Buchnera sp. APS.</title>
        <authorList>
            <person name="Shigenobu S."/>
            <person name="Watanabe H."/>
            <person name="Hattori M."/>
            <person name="Sakaki Y."/>
            <person name="Ishikawa H."/>
        </authorList>
    </citation>
    <scope>NUCLEOTIDE SEQUENCE [LARGE SCALE GENOMIC DNA]</scope>
    <source>
        <strain>APS</strain>
    </source>
</reference>
<gene>
    <name evidence="1" type="primary">tgt</name>
    <name type="ordered locus">BU133</name>
</gene>
<organism>
    <name type="scientific">Buchnera aphidicola subsp. Acyrthosiphon pisum (strain APS)</name>
    <name type="common">Acyrthosiphon pisum symbiotic bacterium</name>
    <dbReference type="NCBI Taxonomy" id="107806"/>
    <lineage>
        <taxon>Bacteria</taxon>
        <taxon>Pseudomonadati</taxon>
        <taxon>Pseudomonadota</taxon>
        <taxon>Gammaproteobacteria</taxon>
        <taxon>Enterobacterales</taxon>
        <taxon>Erwiniaceae</taxon>
        <taxon>Buchnera</taxon>
    </lineage>
</organism>
<sequence length="370" mass="42740">MNFKVLYQDNNARCGVFNFNQEIIETPVFMPVGTYGAVKSISTEEIKNTGSRIILSNAFHLYFRPGLEIIKLHGNLHNFMNWSGPILTDSGGFQVFSLSRFCKVNEEGVIFQNHIDGKKTFLTPKISMKIQSDLGSNIVMIFDQCIEYNQNWEKTKNAMERSLYWAKKSRIYFDSYKNKNSLFGIIHGGIYPSLRDISLQELIKIDFDGYALGGLAVGEPKIEMYKLLDHICPQIPKNKPRYLMGVGKPEDLIEGVRRGVDMFDCVIPTRNARNGHLFVTNGVIKIRNKKYKKDLSCLDNTCVCYTCRYYSRSYLHHLDACNEILGARLNTIHNLHYYQTLMSNIRNSIKNNTFEQFSVNFYKQKNKIDF</sequence>
<name>TGT_BUCAI</name>
<feature type="chain" id="PRO_0000135457" description="Queuine tRNA-ribosyltransferase">
    <location>
        <begin position="1"/>
        <end position="370"/>
    </location>
</feature>
<feature type="region of interest" description="RNA binding" evidence="1">
    <location>
        <begin position="245"/>
        <end position="251"/>
    </location>
</feature>
<feature type="region of interest" description="RNA binding; important for wobble base 34 recognition" evidence="1">
    <location>
        <begin position="269"/>
        <end position="273"/>
    </location>
</feature>
<feature type="active site" description="Proton acceptor" evidence="1">
    <location>
        <position position="89"/>
    </location>
</feature>
<feature type="active site" description="Nucleophile" evidence="1">
    <location>
        <position position="264"/>
    </location>
</feature>
<feature type="binding site" evidence="1">
    <location>
        <begin position="89"/>
        <end position="93"/>
    </location>
    <ligand>
        <name>substrate</name>
    </ligand>
</feature>
<feature type="binding site" evidence="1">
    <location>
        <position position="143"/>
    </location>
    <ligand>
        <name>substrate</name>
    </ligand>
</feature>
<feature type="binding site" evidence="1">
    <location>
        <position position="214"/>
    </location>
    <ligand>
        <name>substrate</name>
    </ligand>
</feature>
<feature type="binding site" evidence="1">
    <location>
        <position position="302"/>
    </location>
    <ligand>
        <name>Zn(2+)</name>
        <dbReference type="ChEBI" id="CHEBI:29105"/>
    </ligand>
</feature>
<feature type="binding site" evidence="1">
    <location>
        <position position="304"/>
    </location>
    <ligand>
        <name>Zn(2+)</name>
        <dbReference type="ChEBI" id="CHEBI:29105"/>
    </ligand>
</feature>
<feature type="binding site" evidence="1">
    <location>
        <position position="307"/>
    </location>
    <ligand>
        <name>Zn(2+)</name>
        <dbReference type="ChEBI" id="CHEBI:29105"/>
    </ligand>
</feature>
<feature type="binding site" evidence="1">
    <location>
        <position position="333"/>
    </location>
    <ligand>
        <name>Zn(2+)</name>
        <dbReference type="ChEBI" id="CHEBI:29105"/>
    </ligand>
</feature>
<comment type="function">
    <text evidence="1">Catalyzes the base-exchange of a guanine (G) residue with the queuine precursor 7-aminomethyl-7-deazaguanine (PreQ1) at position 34 (anticodon wobble position) in tRNAs with GU(N) anticodons (tRNA-Asp, -Asn, -His and -Tyr). Catalysis occurs through a double-displacement mechanism. The nucleophile active site attacks the C1' of nucleotide 34 to detach the guanine base from the RNA, forming a covalent enzyme-RNA intermediate. The proton acceptor active site deprotonates the incoming PreQ1, allowing a nucleophilic attack on the C1' of the ribose to form the product. After dissociation, two additional enzymatic reactions on the tRNA convert PreQ1 to queuine (Q), resulting in the hypermodified nucleoside queuosine (7-(((4,5-cis-dihydroxy-2-cyclopenten-1-yl)amino)methyl)-7-deazaguanosine).</text>
</comment>
<comment type="catalytic activity">
    <reaction evidence="1">
        <text>7-aminomethyl-7-carbaguanine + guanosine(34) in tRNA = 7-aminomethyl-7-carbaguanosine(34) in tRNA + guanine</text>
        <dbReference type="Rhea" id="RHEA:24104"/>
        <dbReference type="Rhea" id="RHEA-COMP:10341"/>
        <dbReference type="Rhea" id="RHEA-COMP:10342"/>
        <dbReference type="ChEBI" id="CHEBI:16235"/>
        <dbReference type="ChEBI" id="CHEBI:58703"/>
        <dbReference type="ChEBI" id="CHEBI:74269"/>
        <dbReference type="ChEBI" id="CHEBI:82833"/>
        <dbReference type="EC" id="2.4.2.29"/>
    </reaction>
</comment>
<comment type="cofactor">
    <cofactor evidence="1">
        <name>Zn(2+)</name>
        <dbReference type="ChEBI" id="CHEBI:29105"/>
    </cofactor>
    <text evidence="1">Binds 1 zinc ion per subunit.</text>
</comment>
<comment type="pathway">
    <text evidence="1">tRNA modification; tRNA-queuosine biosynthesis.</text>
</comment>
<comment type="subunit">
    <text evidence="1">Homodimer. Within each dimer, one monomer is responsible for RNA recognition and catalysis, while the other monomer binds to the replacement base PreQ1.</text>
</comment>
<comment type="similarity">
    <text evidence="1">Belongs to the queuine tRNA-ribosyltransferase family.</text>
</comment>
<evidence type="ECO:0000255" key="1">
    <source>
        <dbReference type="HAMAP-Rule" id="MF_00168"/>
    </source>
</evidence>